<name>SAC2_MOUSE</name>
<dbReference type="EC" id="3.1.3.25" evidence="1 8"/>
<dbReference type="EMBL" id="AK129249">
    <property type="protein sequence ID" value="BAC98059.1"/>
    <property type="molecule type" value="mRNA"/>
</dbReference>
<dbReference type="EMBL" id="AK030870">
    <property type="protein sequence ID" value="BAC27166.1"/>
    <property type="molecule type" value="mRNA"/>
</dbReference>
<dbReference type="EMBL" id="AK034482">
    <property type="protein sequence ID" value="BAC28723.1"/>
    <property type="status" value="ALT_FRAME"/>
    <property type="molecule type" value="mRNA"/>
</dbReference>
<dbReference type="EMBL" id="AK047166">
    <property type="protein sequence ID" value="BAC32978.1"/>
    <property type="molecule type" value="mRNA"/>
</dbReference>
<dbReference type="EMBL" id="AK150418">
    <property type="protein sequence ID" value="BAE29542.1"/>
    <property type="molecule type" value="mRNA"/>
</dbReference>
<dbReference type="EMBL" id="BC067200">
    <property type="protein sequence ID" value="AAH67200.1"/>
    <property type="molecule type" value="mRNA"/>
</dbReference>
<dbReference type="EMBL" id="BC125437">
    <property type="protein sequence ID" value="AAI25438.1"/>
    <property type="molecule type" value="mRNA"/>
</dbReference>
<dbReference type="CCDS" id="CCDS21899.1">
    <molecule id="Q8CDA1-1"/>
</dbReference>
<dbReference type="CCDS" id="CCDS85430.1">
    <molecule id="Q8CDA1-2"/>
</dbReference>
<dbReference type="RefSeq" id="NP_001333446.1">
    <molecule id="Q8CDA1-2"/>
    <property type="nucleotide sequence ID" value="NM_001346517.1"/>
</dbReference>
<dbReference type="RefSeq" id="NP_848756.2">
    <molecule id="Q8CDA1-1"/>
    <property type="nucleotide sequence ID" value="NM_178641.5"/>
</dbReference>
<dbReference type="RefSeq" id="XP_036008418.1">
    <molecule id="Q8CDA1-3"/>
    <property type="nucleotide sequence ID" value="XM_036152525.1"/>
</dbReference>
<dbReference type="SMR" id="Q8CDA1"/>
<dbReference type="BioGRID" id="221671">
    <property type="interactions" value="1"/>
</dbReference>
<dbReference type="FunCoup" id="Q8CDA1">
    <property type="interactions" value="2593"/>
</dbReference>
<dbReference type="STRING" id="10090.ENSMUSP00000045910"/>
<dbReference type="GlyGen" id="Q8CDA1">
    <property type="glycosylation" value="1 site, 1 N-linked glycan (1 site)"/>
</dbReference>
<dbReference type="iPTMnet" id="Q8CDA1"/>
<dbReference type="PhosphoSitePlus" id="Q8CDA1"/>
<dbReference type="jPOST" id="Q8CDA1"/>
<dbReference type="PaxDb" id="10090-ENSMUSP00000045910"/>
<dbReference type="PeptideAtlas" id="Q8CDA1"/>
<dbReference type="ProteomicsDB" id="260812">
    <molecule id="Q8CDA1-1"/>
</dbReference>
<dbReference type="ProteomicsDB" id="260813">
    <molecule id="Q8CDA1-2"/>
</dbReference>
<dbReference type="ProteomicsDB" id="260814">
    <molecule id="Q8CDA1-3"/>
</dbReference>
<dbReference type="ProteomicsDB" id="260815">
    <molecule id="Q8CDA1-4"/>
</dbReference>
<dbReference type="Pumba" id="Q8CDA1"/>
<dbReference type="Antibodypedia" id="32161">
    <property type="antibodies" value="98 antibodies from 19 providers"/>
</dbReference>
<dbReference type="DNASU" id="101490"/>
<dbReference type="Ensembl" id="ENSMUST00000043138.13">
    <molecule id="Q8CDA1-1"/>
    <property type="protein sequence ID" value="ENSMUSP00000045910.7"/>
    <property type="gene ID" value="ENSMUSG00000042105.19"/>
</dbReference>
<dbReference type="Ensembl" id="ENSMUST00000118605.2">
    <molecule id="Q8CDA1-2"/>
    <property type="protein sequence ID" value="ENSMUSP00000113700.2"/>
    <property type="gene ID" value="ENSMUSG00000042105.19"/>
</dbReference>
<dbReference type="Ensembl" id="ENSMUST00000151237.5">
    <molecule id="Q8CDA1-3"/>
    <property type="protein sequence ID" value="ENSMUSP00000146197.2"/>
    <property type="gene ID" value="ENSMUSG00000042105.19"/>
</dbReference>
<dbReference type="GeneID" id="101490"/>
<dbReference type="KEGG" id="mmu:101490"/>
<dbReference type="UCSC" id="uc009jzc.1">
    <molecule id="Q8CDA1-1"/>
    <property type="organism name" value="mouse"/>
</dbReference>
<dbReference type="UCSC" id="uc009jzf.1">
    <molecule id="Q8CDA1-3"/>
    <property type="organism name" value="mouse"/>
</dbReference>
<dbReference type="UCSC" id="uc009jzg.1">
    <molecule id="Q8CDA1-2"/>
    <property type="organism name" value="mouse"/>
</dbReference>
<dbReference type="AGR" id="MGI:2141867"/>
<dbReference type="CTD" id="22876"/>
<dbReference type="MGI" id="MGI:2141867">
    <property type="gene designation" value="Inpp5f"/>
</dbReference>
<dbReference type="VEuPathDB" id="HostDB:ENSMUSG00000042105"/>
<dbReference type="eggNOG" id="KOG1890">
    <property type="taxonomic scope" value="Eukaryota"/>
</dbReference>
<dbReference type="GeneTree" id="ENSGT00940000155996"/>
<dbReference type="HOGENOM" id="CLU_044255_0_0_1"/>
<dbReference type="InParanoid" id="Q8CDA1"/>
<dbReference type="OMA" id="ALHKESQ"/>
<dbReference type="OrthoDB" id="54983at9989"/>
<dbReference type="PhylomeDB" id="Q8CDA1"/>
<dbReference type="TreeFam" id="TF313543"/>
<dbReference type="BRENDA" id="3.1.3.25">
    <property type="organism ID" value="3474"/>
</dbReference>
<dbReference type="Reactome" id="R-MMU-1660516">
    <property type="pathway name" value="Synthesis of PIPs at the early endosome membrane"/>
</dbReference>
<dbReference type="BioGRID-ORCS" id="101490">
    <property type="hits" value="1 hit in 79 CRISPR screens"/>
</dbReference>
<dbReference type="ChiTaRS" id="Inpp5f">
    <property type="organism name" value="mouse"/>
</dbReference>
<dbReference type="PRO" id="PR:Q8CDA1"/>
<dbReference type="Proteomes" id="UP000000589">
    <property type="component" value="Chromosome 7"/>
</dbReference>
<dbReference type="RNAct" id="Q8CDA1">
    <property type="molecule type" value="protein"/>
</dbReference>
<dbReference type="Bgee" id="ENSMUSG00000042105">
    <property type="expression patterns" value="Expressed in cortical plate and 233 other cell types or tissues"/>
</dbReference>
<dbReference type="ExpressionAtlas" id="Q8CDA1">
    <property type="expression patterns" value="baseline and differential"/>
</dbReference>
<dbReference type="GO" id="GO:0030424">
    <property type="term" value="C:axon"/>
    <property type="evidence" value="ECO:0000314"/>
    <property type="project" value="ParkinsonsUK-UCL"/>
</dbReference>
<dbReference type="GO" id="GO:0045334">
    <property type="term" value="C:clathrin-coated endocytic vesicle"/>
    <property type="evidence" value="ECO:0000314"/>
    <property type="project" value="UniProtKB"/>
</dbReference>
<dbReference type="GO" id="GO:0005905">
    <property type="term" value="C:clathrin-coated pit"/>
    <property type="evidence" value="ECO:0007669"/>
    <property type="project" value="UniProtKB-SubCell"/>
</dbReference>
<dbReference type="GO" id="GO:0005737">
    <property type="term" value="C:cytoplasm"/>
    <property type="evidence" value="ECO:0000314"/>
    <property type="project" value="ParkinsonsUK-UCL"/>
</dbReference>
<dbReference type="GO" id="GO:0030425">
    <property type="term" value="C:dendrite"/>
    <property type="evidence" value="ECO:0000314"/>
    <property type="project" value="ParkinsonsUK-UCL"/>
</dbReference>
<dbReference type="GO" id="GO:0005769">
    <property type="term" value="C:early endosome"/>
    <property type="evidence" value="ECO:0000314"/>
    <property type="project" value="UniProtKB"/>
</dbReference>
<dbReference type="GO" id="GO:0043025">
    <property type="term" value="C:neuronal cell body"/>
    <property type="evidence" value="ECO:0000314"/>
    <property type="project" value="ParkinsonsUK-UCL"/>
</dbReference>
<dbReference type="GO" id="GO:0055037">
    <property type="term" value="C:recycling endosome"/>
    <property type="evidence" value="ECO:0000250"/>
    <property type="project" value="UniProtKB"/>
</dbReference>
<dbReference type="GO" id="GO:0052833">
    <property type="term" value="F:inositol monophosphate 4-phosphatase activity"/>
    <property type="evidence" value="ECO:0000314"/>
    <property type="project" value="UniProtKB"/>
</dbReference>
<dbReference type="GO" id="GO:0034596">
    <property type="term" value="F:phosphatidylinositol phosphate 4-phosphatase activity"/>
    <property type="evidence" value="ECO:0000314"/>
    <property type="project" value="ParkinsonsUK-UCL"/>
</dbReference>
<dbReference type="GO" id="GO:0034595">
    <property type="term" value="F:phosphatidylinositol phosphate 5-phosphatase activity"/>
    <property type="evidence" value="ECO:0007669"/>
    <property type="project" value="Ensembl"/>
</dbReference>
<dbReference type="GO" id="GO:0042803">
    <property type="term" value="F:protein homodimerization activity"/>
    <property type="evidence" value="ECO:0007669"/>
    <property type="project" value="Ensembl"/>
</dbReference>
<dbReference type="GO" id="GO:0008344">
    <property type="term" value="P:adult locomotory behavior"/>
    <property type="evidence" value="ECO:0000315"/>
    <property type="project" value="ParkinsonsUK-UCL"/>
</dbReference>
<dbReference type="GO" id="GO:0014898">
    <property type="term" value="P:cardiac muscle hypertrophy in response to stress"/>
    <property type="evidence" value="ECO:0000315"/>
    <property type="project" value="MGI"/>
</dbReference>
<dbReference type="GO" id="GO:0072583">
    <property type="term" value="P:clathrin-dependent endocytosis"/>
    <property type="evidence" value="ECO:0000314"/>
    <property type="project" value="UniProtKB"/>
</dbReference>
<dbReference type="GO" id="GO:0048681">
    <property type="term" value="P:negative regulation of axon regeneration"/>
    <property type="evidence" value="ECO:0000315"/>
    <property type="project" value="ParkinsonsUK-UCL"/>
</dbReference>
<dbReference type="GO" id="GO:0042532">
    <property type="term" value="P:negative regulation of tyrosine phosphorylation of STAT protein"/>
    <property type="evidence" value="ECO:0000250"/>
    <property type="project" value="UniProtKB"/>
</dbReference>
<dbReference type="GO" id="GO:0043491">
    <property type="term" value="P:phosphatidylinositol 3-kinase/protein kinase B signal transduction"/>
    <property type="evidence" value="ECO:0000315"/>
    <property type="project" value="MGI"/>
</dbReference>
<dbReference type="GO" id="GO:0031161">
    <property type="term" value="P:phosphatidylinositol catabolic process"/>
    <property type="evidence" value="ECO:0000315"/>
    <property type="project" value="MGI"/>
</dbReference>
<dbReference type="GO" id="GO:0046856">
    <property type="term" value="P:phosphatidylinositol dephosphorylation"/>
    <property type="evidence" value="ECO:0000314"/>
    <property type="project" value="ParkinsonsUK-UCL"/>
</dbReference>
<dbReference type="GO" id="GO:0001921">
    <property type="term" value="P:positive regulation of receptor recycling"/>
    <property type="evidence" value="ECO:0000315"/>
    <property type="project" value="ParkinsonsUK-UCL"/>
</dbReference>
<dbReference type="GO" id="GO:2000145">
    <property type="term" value="P:regulation of cell motility"/>
    <property type="evidence" value="ECO:0000315"/>
    <property type="project" value="UniProtKB"/>
</dbReference>
<dbReference type="GO" id="GO:2001135">
    <property type="term" value="P:regulation of endocytic recycling"/>
    <property type="evidence" value="ECO:0000315"/>
    <property type="project" value="UniProtKB"/>
</dbReference>
<dbReference type="GO" id="GO:0051896">
    <property type="term" value="P:regulation of phosphatidylinositol 3-kinase/protein kinase B signal transduction"/>
    <property type="evidence" value="ECO:0000266"/>
    <property type="project" value="MGI"/>
</dbReference>
<dbReference type="InterPro" id="IPR034753">
    <property type="entry name" value="hSac2"/>
</dbReference>
<dbReference type="InterPro" id="IPR022158">
    <property type="entry name" value="Inositol_phosphatase"/>
</dbReference>
<dbReference type="InterPro" id="IPR002013">
    <property type="entry name" value="SAC_dom"/>
</dbReference>
<dbReference type="PANTHER" id="PTHR45662">
    <property type="entry name" value="PHOSPHATIDYLINOSITIDE PHOSPHATASE SAC1"/>
    <property type="match status" value="1"/>
</dbReference>
<dbReference type="PANTHER" id="PTHR45662:SF8">
    <property type="entry name" value="PHOSPHATIDYLINOSITIDE PHOSPHATASE SAC2"/>
    <property type="match status" value="1"/>
</dbReference>
<dbReference type="Pfam" id="PF12456">
    <property type="entry name" value="hSac2"/>
    <property type="match status" value="1"/>
</dbReference>
<dbReference type="Pfam" id="PF02383">
    <property type="entry name" value="Syja_N"/>
    <property type="match status" value="1"/>
</dbReference>
<dbReference type="PROSITE" id="PS51791">
    <property type="entry name" value="HSAC2"/>
    <property type="match status" value="1"/>
</dbReference>
<dbReference type="PROSITE" id="PS50275">
    <property type="entry name" value="SAC"/>
    <property type="match status" value="1"/>
</dbReference>
<feature type="chain" id="PRO_0000331622" description="Phosphatidylinositide phosphatase SAC2">
    <location>
        <begin position="1"/>
        <end position="1132"/>
    </location>
</feature>
<feature type="domain" description="SAC" evidence="2">
    <location>
        <begin position="167"/>
        <end position="518"/>
    </location>
</feature>
<feature type="domain" description="hSac2" evidence="3">
    <location>
        <begin position="593"/>
        <end position="760"/>
    </location>
</feature>
<feature type="region of interest" description="Disordered" evidence="4">
    <location>
        <begin position="250"/>
        <end position="269"/>
    </location>
</feature>
<feature type="region of interest" description="Disordered" evidence="4">
    <location>
        <begin position="833"/>
        <end position="872"/>
    </location>
</feature>
<feature type="region of interest" description="Disordered" evidence="4">
    <location>
        <begin position="908"/>
        <end position="951"/>
    </location>
</feature>
<feature type="region of interest" description="Disordered" evidence="4">
    <location>
        <begin position="981"/>
        <end position="1016"/>
    </location>
</feature>
<feature type="compositionally biased region" description="Basic and acidic residues" evidence="4">
    <location>
        <begin position="857"/>
        <end position="872"/>
    </location>
</feature>
<feature type="compositionally biased region" description="Polar residues" evidence="4">
    <location>
        <begin position="908"/>
        <end position="918"/>
    </location>
</feature>
<feature type="compositionally biased region" description="Polar residues" evidence="4">
    <location>
        <begin position="994"/>
        <end position="1005"/>
    </location>
</feature>
<feature type="modified residue" description="Phosphoserine" evidence="15">
    <location>
        <position position="714"/>
    </location>
</feature>
<feature type="modified residue" description="Phosphoserine" evidence="15">
    <location>
        <position position="827"/>
    </location>
</feature>
<feature type="modified residue" description="Phosphoserine" evidence="15">
    <location>
        <position position="830"/>
    </location>
</feature>
<feature type="modified residue" description="Phosphoserine" evidence="15">
    <location>
        <position position="879"/>
    </location>
</feature>
<feature type="modified residue" description="Phosphoserine" evidence="15">
    <location>
        <position position="882"/>
    </location>
</feature>
<feature type="modified residue" description="Phosphoserine" evidence="15">
    <location>
        <position position="908"/>
    </location>
</feature>
<feature type="modified residue" description="Phosphoserine" evidence="15">
    <location>
        <position position="911"/>
    </location>
</feature>
<feature type="modified residue" description="Phosphoserine" evidence="15">
    <location>
        <position position="1103"/>
    </location>
</feature>
<feature type="splice variant" id="VSP_033270" description="In isoform 3." evidence="11">
    <location>
        <begin position="1"/>
        <end position="691"/>
    </location>
</feature>
<feature type="splice variant" id="VSP_033271" description="In isoform 2." evidence="10">
    <location>
        <begin position="1"/>
        <end position="627"/>
    </location>
</feature>
<feature type="splice variant" id="VSP_033272" description="In isoform 4." evidence="11">
    <original>VIVNLVDQAGREKIIGDAYLKQVLLFNNPKLTYVSFDFHEHC</original>
    <variation>RIWVWSQHPLTQREEKRREEKRREEKRREEKRREEKRREEVT</variation>
    <location>
        <begin position="373"/>
        <end position="414"/>
    </location>
</feature>
<feature type="splice variant" id="VSP_033273" description="In isoform 4." evidence="11">
    <location>
        <begin position="415"/>
        <end position="1132"/>
    </location>
</feature>
<feature type="splice variant" id="VSP_033274" description="In isoform 2." evidence="10">
    <original>PS</original>
    <variation>MH</variation>
    <location>
        <begin position="628"/>
        <end position="629"/>
    </location>
</feature>
<feature type="mutagenesis site" description="Has a diffuse cytosolic localization." evidence="7">
    <original>D</original>
    <variation>A</variation>
    <location>
        <position position="460"/>
    </location>
</feature>
<feature type="mutagenesis site" description="Loss of inositol 4-phosphatase activity. No effect on subcellular localization. No effect on interaction with OCRL, INPP5B and IPP4A." evidence="7">
    <original>D</original>
    <variation>N</variation>
    <location>
        <position position="460"/>
    </location>
</feature>
<feature type="sequence conflict" description="In Ref. 3; AAH67200." evidence="12" ref="3">
    <original>E</original>
    <variation>D</variation>
    <location>
        <position position="728"/>
    </location>
</feature>
<evidence type="ECO:0000250" key="1">
    <source>
        <dbReference type="UniProtKB" id="Q9Y2H2"/>
    </source>
</evidence>
<evidence type="ECO:0000255" key="2">
    <source>
        <dbReference type="PROSITE-ProRule" id="PRU00183"/>
    </source>
</evidence>
<evidence type="ECO:0000255" key="3">
    <source>
        <dbReference type="PROSITE-ProRule" id="PRU01127"/>
    </source>
</evidence>
<evidence type="ECO:0000256" key="4">
    <source>
        <dbReference type="SAM" id="MobiDB-lite"/>
    </source>
</evidence>
<evidence type="ECO:0000269" key="5">
    <source>
    </source>
</evidence>
<evidence type="ECO:0000269" key="6">
    <source>
    </source>
</evidence>
<evidence type="ECO:0000269" key="7">
    <source>
    </source>
</evidence>
<evidence type="ECO:0000269" key="8">
    <source>
    </source>
</evidence>
<evidence type="ECO:0000269" key="9">
    <source>
    </source>
</evidence>
<evidence type="ECO:0000303" key="10">
    <source>
    </source>
</evidence>
<evidence type="ECO:0000303" key="11">
    <source>
    </source>
</evidence>
<evidence type="ECO:0000305" key="12"/>
<evidence type="ECO:0000305" key="13">
    <source>
    </source>
</evidence>
<evidence type="ECO:0000312" key="14">
    <source>
        <dbReference type="MGI" id="MGI:2141867"/>
    </source>
</evidence>
<evidence type="ECO:0007744" key="15">
    <source>
    </source>
</evidence>
<accession>Q8CDA1</accession>
<accession>Q3UCS0</accession>
<accession>Q6NX83</accession>
<accession>Q6ZQ16</accession>
<accession>Q8C8G7</accession>
<accession>Q8CBW2</accession>
<proteinExistence type="evidence at protein level"/>
<organism>
    <name type="scientific">Mus musculus</name>
    <name type="common">Mouse</name>
    <dbReference type="NCBI Taxonomy" id="10090"/>
    <lineage>
        <taxon>Eukaryota</taxon>
        <taxon>Metazoa</taxon>
        <taxon>Chordata</taxon>
        <taxon>Craniata</taxon>
        <taxon>Vertebrata</taxon>
        <taxon>Euteleostomi</taxon>
        <taxon>Mammalia</taxon>
        <taxon>Eutheria</taxon>
        <taxon>Euarchontoglires</taxon>
        <taxon>Glires</taxon>
        <taxon>Rodentia</taxon>
        <taxon>Myomorpha</taxon>
        <taxon>Muroidea</taxon>
        <taxon>Muridae</taxon>
        <taxon>Murinae</taxon>
        <taxon>Mus</taxon>
        <taxon>Mus</taxon>
    </lineage>
</organism>
<sequence>MELFQAKDHYILQQGERALWCSRRDGGLQLRPATDLLLAWNPICLGLVEGVIGKIQLHSDLPWWLILIRQKALVGKLPGDHEVCKVTKIAVLSLSEMEPQELELELCKKHHFGINKPEKIIPSPDDSKFLLKTFTNIKSNVSAPNKKKVKESKEKEKLERRLLEELLKMFMDSESFYYSLTYDLTNSVQRQSTGERDGRPLWQKVDDRFFWNKYMIQALTEIGTPDVDFWIIPIIQGFVQIEELVVNYNESSDDDKSSPETPPQDSTCVDDIHPRFLVALISRRSRHRAGMRYKRRGVDKNGNVANYVETEQLIHVHHHTLSFIQTRGSVPVFWSQVGYRYNPRPRLDKSEKETVDCFCAHFEEQLKIYKKQVIVNLVDQAGREKIIGDAYLKQVLLFNNPKLTYVSFDFHEHCRGMKFENVQTLTDAIHDIIIDMKWCWVDQAGVICKQEGIFRVNCMDCLDRTNVVQAAIARVVMEQQLKKLGVMPPEQPLPVKCNRTYQIMWANNGDSISRQYAGTAALKGDFTRTGERKLAGVMKDGVNSANRYYLSRFKDAYRQAVIDLMQGVPVTEDLYSIFTKEKEHEALHKESQRSHQELISQLLQSYMQLLLPGDEKFHGGWALVDCDPSLTDAAHRDVEVLLLLSNAAYYVAYYDDEVDKVNQYQRLGLEDLERIEIGPEPTLFGKPKFSCMRLHYRCKEAGGYFHTLRAVPRSPEEDGKDTLQCIAEMLQITKQAMGLDVPIIEKKLERKSSKPHEDIIGIRSQNQGSLAQGKSFLMSKFSSLNQKVKQTKSNVNIGNLRKLGNFTKPEMKVNFLKPNLKVNLWKSDSSLETMENPGVMGNKVQGESDGDISSDNDSYHSDEFLTNSKSEEDKQLANSLESVGPIDYILPSCGIIVSAPRLGSRSQSASSIDVSTHAPSEAAAGPGSELGKGLESPLKKSPSADSIHTRTGFTKPMDVYCQRFVQDAQNKMNDLSEIRSVAQKSEEGSHKTNRVSNEETQSEPMGQTPPRPSQLNVSCSVAGPPFLSVEPVHSVLSQKTPSSGSSLLELEAGLCVTPSSESSSSRAVSPFAKIRSSMVQVANITQAGLTHGINLAVAKVQKSPAEPEAVNEIQQNELKNMFTQCQTRIIQI</sequence>
<keyword id="KW-0025">Alternative splicing</keyword>
<keyword id="KW-0168">Coated pit</keyword>
<keyword id="KW-0967">Endosome</keyword>
<keyword id="KW-0378">Hydrolase</keyword>
<keyword id="KW-0472">Membrane</keyword>
<keyword id="KW-0597">Phosphoprotein</keyword>
<keyword id="KW-1185">Reference proteome</keyword>
<protein>
    <recommendedName>
        <fullName>Phosphatidylinositide phosphatase SAC2</fullName>
        <ecNumber evidence="1 8">3.1.3.25</ecNumber>
    </recommendedName>
    <alternativeName>
        <fullName evidence="14">Inositol polyphosphate 5-phosphatase F</fullName>
    </alternativeName>
    <alternativeName>
        <fullName>Sac domain-containing inositol phosphatase 2</fullName>
    </alternativeName>
    <alternativeName>
        <fullName evidence="13">Sac domain-containing phosphoinositide 4-phosphatase 2</fullName>
        <shortName>hSAC2</shortName>
    </alternativeName>
</protein>
<gene>
    <name evidence="14" type="primary">Inpp5f</name>
    <name type="synonym">Kiaa0966</name>
    <name type="synonym">Sac2</name>
</gene>
<reference key="1">
    <citation type="journal article" date="2003" name="DNA Res.">
        <title>Prediction of the coding sequences of mouse homologues of KIAA gene: III. The complete nucleotide sequences of 500 mouse KIAA-homologous cDNAs identified by screening of terminal sequences of cDNA clones randomly sampled from size-fractionated libraries.</title>
        <authorList>
            <person name="Okazaki N."/>
            <person name="Kikuno R."/>
            <person name="Ohara R."/>
            <person name="Inamoto S."/>
            <person name="Koseki H."/>
            <person name="Hiraoka S."/>
            <person name="Saga Y."/>
            <person name="Nagase T."/>
            <person name="Ohara O."/>
            <person name="Koga H."/>
        </authorList>
    </citation>
    <scope>NUCLEOTIDE SEQUENCE [LARGE SCALE MRNA] (ISOFORM 1)</scope>
    <source>
        <tissue>Embryonic tail</tissue>
    </source>
</reference>
<reference key="2">
    <citation type="journal article" date="2005" name="Science">
        <title>The transcriptional landscape of the mammalian genome.</title>
        <authorList>
            <person name="Carninci P."/>
            <person name="Kasukawa T."/>
            <person name="Katayama S."/>
            <person name="Gough J."/>
            <person name="Frith M.C."/>
            <person name="Maeda N."/>
            <person name="Oyama R."/>
            <person name="Ravasi T."/>
            <person name="Lenhard B."/>
            <person name="Wells C."/>
            <person name="Kodzius R."/>
            <person name="Shimokawa K."/>
            <person name="Bajic V.B."/>
            <person name="Brenner S.E."/>
            <person name="Batalov S."/>
            <person name="Forrest A.R."/>
            <person name="Zavolan M."/>
            <person name="Davis M.J."/>
            <person name="Wilming L.G."/>
            <person name="Aidinis V."/>
            <person name="Allen J.E."/>
            <person name="Ambesi-Impiombato A."/>
            <person name="Apweiler R."/>
            <person name="Aturaliya R.N."/>
            <person name="Bailey T.L."/>
            <person name="Bansal M."/>
            <person name="Baxter L."/>
            <person name="Beisel K.W."/>
            <person name="Bersano T."/>
            <person name="Bono H."/>
            <person name="Chalk A.M."/>
            <person name="Chiu K.P."/>
            <person name="Choudhary V."/>
            <person name="Christoffels A."/>
            <person name="Clutterbuck D.R."/>
            <person name="Crowe M.L."/>
            <person name="Dalla E."/>
            <person name="Dalrymple B.P."/>
            <person name="de Bono B."/>
            <person name="Della Gatta G."/>
            <person name="di Bernardo D."/>
            <person name="Down T."/>
            <person name="Engstrom P."/>
            <person name="Fagiolini M."/>
            <person name="Faulkner G."/>
            <person name="Fletcher C.F."/>
            <person name="Fukushima T."/>
            <person name="Furuno M."/>
            <person name="Futaki S."/>
            <person name="Gariboldi M."/>
            <person name="Georgii-Hemming P."/>
            <person name="Gingeras T.R."/>
            <person name="Gojobori T."/>
            <person name="Green R.E."/>
            <person name="Gustincich S."/>
            <person name="Harbers M."/>
            <person name="Hayashi Y."/>
            <person name="Hensch T.K."/>
            <person name="Hirokawa N."/>
            <person name="Hill D."/>
            <person name="Huminiecki L."/>
            <person name="Iacono M."/>
            <person name="Ikeo K."/>
            <person name="Iwama A."/>
            <person name="Ishikawa T."/>
            <person name="Jakt M."/>
            <person name="Kanapin A."/>
            <person name="Katoh M."/>
            <person name="Kawasawa Y."/>
            <person name="Kelso J."/>
            <person name="Kitamura H."/>
            <person name="Kitano H."/>
            <person name="Kollias G."/>
            <person name="Krishnan S.P."/>
            <person name="Kruger A."/>
            <person name="Kummerfeld S.K."/>
            <person name="Kurochkin I.V."/>
            <person name="Lareau L.F."/>
            <person name="Lazarevic D."/>
            <person name="Lipovich L."/>
            <person name="Liu J."/>
            <person name="Liuni S."/>
            <person name="McWilliam S."/>
            <person name="Madan Babu M."/>
            <person name="Madera M."/>
            <person name="Marchionni L."/>
            <person name="Matsuda H."/>
            <person name="Matsuzawa S."/>
            <person name="Miki H."/>
            <person name="Mignone F."/>
            <person name="Miyake S."/>
            <person name="Morris K."/>
            <person name="Mottagui-Tabar S."/>
            <person name="Mulder N."/>
            <person name="Nakano N."/>
            <person name="Nakauchi H."/>
            <person name="Ng P."/>
            <person name="Nilsson R."/>
            <person name="Nishiguchi S."/>
            <person name="Nishikawa S."/>
            <person name="Nori F."/>
            <person name="Ohara O."/>
            <person name="Okazaki Y."/>
            <person name="Orlando V."/>
            <person name="Pang K.C."/>
            <person name="Pavan W.J."/>
            <person name="Pavesi G."/>
            <person name="Pesole G."/>
            <person name="Petrovsky N."/>
            <person name="Piazza S."/>
            <person name="Reed J."/>
            <person name="Reid J.F."/>
            <person name="Ring B.Z."/>
            <person name="Ringwald M."/>
            <person name="Rost B."/>
            <person name="Ruan Y."/>
            <person name="Salzberg S.L."/>
            <person name="Sandelin A."/>
            <person name="Schneider C."/>
            <person name="Schoenbach C."/>
            <person name="Sekiguchi K."/>
            <person name="Semple C.A."/>
            <person name="Seno S."/>
            <person name="Sessa L."/>
            <person name="Sheng Y."/>
            <person name="Shibata Y."/>
            <person name="Shimada H."/>
            <person name="Shimada K."/>
            <person name="Silva D."/>
            <person name="Sinclair B."/>
            <person name="Sperling S."/>
            <person name="Stupka E."/>
            <person name="Sugiura K."/>
            <person name="Sultana R."/>
            <person name="Takenaka Y."/>
            <person name="Taki K."/>
            <person name="Tammoja K."/>
            <person name="Tan S.L."/>
            <person name="Tang S."/>
            <person name="Taylor M.S."/>
            <person name="Tegner J."/>
            <person name="Teichmann S.A."/>
            <person name="Ueda H.R."/>
            <person name="van Nimwegen E."/>
            <person name="Verardo R."/>
            <person name="Wei C.L."/>
            <person name="Yagi K."/>
            <person name="Yamanishi H."/>
            <person name="Zabarovsky E."/>
            <person name="Zhu S."/>
            <person name="Zimmer A."/>
            <person name="Hide W."/>
            <person name="Bult C."/>
            <person name="Grimmond S.M."/>
            <person name="Teasdale R.D."/>
            <person name="Liu E.T."/>
            <person name="Brusic V."/>
            <person name="Quackenbush J."/>
            <person name="Wahlestedt C."/>
            <person name="Mattick J.S."/>
            <person name="Hume D.A."/>
            <person name="Kai C."/>
            <person name="Sasaki D."/>
            <person name="Tomaru Y."/>
            <person name="Fukuda S."/>
            <person name="Kanamori-Katayama M."/>
            <person name="Suzuki M."/>
            <person name="Aoki J."/>
            <person name="Arakawa T."/>
            <person name="Iida J."/>
            <person name="Imamura K."/>
            <person name="Itoh M."/>
            <person name="Kato T."/>
            <person name="Kawaji H."/>
            <person name="Kawagashira N."/>
            <person name="Kawashima T."/>
            <person name="Kojima M."/>
            <person name="Kondo S."/>
            <person name="Konno H."/>
            <person name="Nakano K."/>
            <person name="Ninomiya N."/>
            <person name="Nishio T."/>
            <person name="Okada M."/>
            <person name="Plessy C."/>
            <person name="Shibata K."/>
            <person name="Shiraki T."/>
            <person name="Suzuki S."/>
            <person name="Tagami M."/>
            <person name="Waki K."/>
            <person name="Watahiki A."/>
            <person name="Okamura-Oho Y."/>
            <person name="Suzuki H."/>
            <person name="Kawai J."/>
            <person name="Hayashizaki Y."/>
        </authorList>
    </citation>
    <scope>NUCLEOTIDE SEQUENCE [LARGE SCALE MRNA] (ISOFORMS 1; 3 AND 4)</scope>
    <source>
        <strain>C57BL/6J</strain>
        <tissue>Bone marrow</tissue>
        <tissue>Cerebellum</tissue>
        <tissue>Diencephalon</tissue>
        <tissue>Thymus</tissue>
    </source>
</reference>
<reference key="3">
    <citation type="journal article" date="2004" name="Genome Res.">
        <title>The status, quality, and expansion of the NIH full-length cDNA project: the Mammalian Gene Collection (MGC).</title>
        <authorList>
            <consortium name="The MGC Project Team"/>
        </authorList>
    </citation>
    <scope>NUCLEOTIDE SEQUENCE [LARGE SCALE MRNA] (ISOFORMS 1 AND 2)</scope>
    <source>
        <strain>C57BL/6J</strain>
        <tissue>Brain</tissue>
    </source>
</reference>
<reference key="4">
    <citation type="journal article" date="2007" name="Nat. Med.">
        <title>Hdac2 regulates the cardiac hypertrophic response by modulating Gsk3 beta activity.</title>
        <authorList>
            <person name="Trivedi C.M."/>
            <person name="Luo Y."/>
            <person name="Yin Z."/>
            <person name="Zhang M."/>
            <person name="Zhu W."/>
            <person name="Wang T."/>
            <person name="Floss T."/>
            <person name="Goettlicher M."/>
            <person name="Noppinger P.R."/>
            <person name="Wurst W."/>
            <person name="Ferrari V.A."/>
            <person name="Abrams C.S."/>
            <person name="Gruber P.J."/>
            <person name="Epstein J.A."/>
        </authorList>
    </citation>
    <scope>FUNCTION</scope>
    <scope>INDUCTION</scope>
</reference>
<reference key="5">
    <citation type="journal article" date="2007" name="Proc. Natl. Acad. Sci. U.S.A.">
        <title>Large-scale phosphorylation analysis of mouse liver.</title>
        <authorList>
            <person name="Villen J."/>
            <person name="Beausoleil S.A."/>
            <person name="Gerber S.A."/>
            <person name="Gygi S.P."/>
        </authorList>
    </citation>
    <scope>IDENTIFICATION BY MASS SPECTROMETRY [LARGE SCALE ANALYSIS]</scope>
    <source>
        <tissue>Liver</tissue>
    </source>
</reference>
<reference key="6">
    <citation type="journal article" date="2009" name="Circ. Res.">
        <title>Inpp5f is a polyphosphoinositide phosphatase that regulates cardiac hypertrophic responsiveness.</title>
        <authorList>
            <person name="Zhu W."/>
            <person name="Trivedi C.M."/>
            <person name="Zhou D."/>
            <person name="Yuan L."/>
            <person name="Lu M.M."/>
            <person name="Epstein J.A."/>
        </authorList>
    </citation>
    <scope>FUNCTION</scope>
    <scope>DISRUPTION PHENOTYPE</scope>
</reference>
<reference key="7">
    <citation type="journal article" date="2010" name="Cell">
        <title>A tissue-specific atlas of mouse protein phosphorylation and expression.</title>
        <authorList>
            <person name="Huttlin E.L."/>
            <person name="Jedrychowski M.P."/>
            <person name="Elias J.E."/>
            <person name="Goswami T."/>
            <person name="Rad R."/>
            <person name="Beausoleil S.A."/>
            <person name="Villen J."/>
            <person name="Haas W."/>
            <person name="Sowa M.E."/>
            <person name="Gygi S.P."/>
        </authorList>
    </citation>
    <scope>PHOSPHORYLATION [LARGE SCALE ANALYSIS] AT SER-714; SER-827; SER-830; SER-879; SER-882; SER-908; SER-911 AND SER-1103</scope>
    <scope>IDENTIFICATION BY MASS SPECTROMETRY [LARGE SCALE ANALYSIS]</scope>
    <source>
        <tissue>Brain</tissue>
        <tissue>Kidney</tissue>
        <tissue>Liver</tissue>
        <tissue>Lung</tissue>
        <tissue>Pancreas</tissue>
        <tissue>Spleen</tissue>
        <tissue>Testis</tissue>
    </source>
</reference>
<reference key="8">
    <citation type="journal article" date="2015" name="J. Cell Biol.">
        <title>Sac2/INPP5F is an inositol 4-phosphatase that functions in the endocytic pathway.</title>
        <authorList>
            <person name="Nakatsu F."/>
            <person name="Messa M."/>
            <person name="Nandez R."/>
            <person name="Czapla H."/>
            <person name="Zou Y."/>
            <person name="Strittmatter S.M."/>
            <person name="De Camilli P."/>
        </authorList>
    </citation>
    <scope>FUNCTION</scope>
    <scope>SUBCELLULAR LOCATION</scope>
    <scope>INTERACTION WITH INPP4A; INPP5B; OCRL AND RAB5A</scope>
    <scope>MUTAGENESIS OF ASP-460</scope>
</reference>
<reference key="9">
    <citation type="journal article" date="2015" name="J. Cell Biol.">
        <title>Spatiotemporal control of phosphatidylinositol 4-phosphate by Sac2 regulates endocytic recycling.</title>
        <authorList>
            <person name="Hsu F."/>
            <person name="Hu F."/>
            <person name="Mao Y."/>
        </authorList>
    </citation>
    <scope>FUNCTION</scope>
    <scope>TISSUE SPECIFICITY</scope>
</reference>
<reference key="10">
    <citation type="journal article" date="2015" name="J. Neurosci.">
        <title>Gene-silencing screen for mammalian axon regeneration identifies Inpp5f (Sac2) as an endogenous suppressor of repair after spinal cord injury.</title>
        <authorList>
            <person name="Zou Y."/>
            <person name="Stagi M."/>
            <person name="Wang X."/>
            <person name="Yigitkanli K."/>
            <person name="Siegel C.S."/>
            <person name="Nakatsu F."/>
            <person name="Cafferty W.B."/>
            <person name="Strittmatter S.M."/>
        </authorList>
    </citation>
    <scope>DISRUPTION PHENOTYPE</scope>
    <scope>TISSUE SPECIFICITY</scope>
</reference>
<comment type="function">
    <text evidence="1 5 6 7 8 9">Inositol 4-phosphatase which mainly acts on phosphatidylinositol 4-phosphate. May be functionally linked to OCRL, which converts phosphatidylinositol 4,5-bisphosphate to phosphatidylinositol, for a sequential dephosphorylation of phosphatidylinositol 4,5-bisphosphate at the 5 and 4 position of inositol, thus playing an important role in the endocytic recycling (PubMed:25869668, PubMed:25869669). Regulator of TF:TFRC and integrins recycling pathway, is also involved in cell migration mechanisms (By similarity). Modulates AKT/GSK3B pathway by decreasing AKT and GSK3B phosphorylation (PubMed:17322895). Negatively regulates STAT3 signaling pathway through inhibition of STAT3 phosphorylation and translocation to the nucleus (By similarity). Functionally important modulator of cardiac myocyte size and of the cardiac response to stress (PubMed:19875726). May play a role as negative regulator of axon regeneration after central nervous system injuries (PubMed:26203138).</text>
</comment>
<comment type="catalytic activity">
    <reaction evidence="1">
        <text>a myo-inositol phosphate + H2O = myo-inositol + phosphate</text>
        <dbReference type="Rhea" id="RHEA:24056"/>
        <dbReference type="ChEBI" id="CHEBI:15377"/>
        <dbReference type="ChEBI" id="CHEBI:17268"/>
        <dbReference type="ChEBI" id="CHEBI:43474"/>
        <dbReference type="ChEBI" id="CHEBI:84139"/>
        <dbReference type="EC" id="3.1.3.25"/>
    </reaction>
</comment>
<comment type="subunit">
    <text evidence="1 7">Homodimer (By similarity). Interacts with OCRL and RAB5. Interacts with INPP5B and INPP4A (PubMed:25869668). Interacts with STAT3; the interaction is independent of STAT3 'Tyr-705' phosphorylation status (By similarity).</text>
</comment>
<comment type="subcellular location">
    <subcellularLocation>
        <location evidence="7">Membrane</location>
        <location evidence="7">Clathrin-coated pit</location>
    </subcellularLocation>
    <subcellularLocation>
        <location evidence="7">Early endosome</location>
    </subcellularLocation>
    <subcellularLocation>
        <location evidence="1">Recycling endosome</location>
    </subcellularLocation>
    <text evidence="7">Also found on macropinosomes.</text>
</comment>
<comment type="alternative products">
    <event type="alternative splicing"/>
    <isoform>
        <id>Q8CDA1-1</id>
        <name>1</name>
        <sequence type="displayed"/>
    </isoform>
    <isoform>
        <id>Q8CDA1-2</id>
        <name>2</name>
        <sequence type="described" ref="VSP_033271 VSP_033274"/>
    </isoform>
    <isoform>
        <id>Q8CDA1-3</id>
        <name>3</name>
        <sequence type="described" ref="VSP_033270"/>
    </isoform>
    <isoform>
        <id>Q8CDA1-4</id>
        <name>4</name>
        <sequence type="described" ref="VSP_033272 VSP_033273"/>
    </isoform>
</comment>
<comment type="tissue specificity">
    <text evidence="8 9">Highly expressed in brain and hypothalamus, expressed in lung and pancreas, and detected at low levels in liver and heart (at protein level).</text>
</comment>
<comment type="induction">
    <text evidence="5">Up-regulated in the absence of histone deacetylase 2/HDAC2 in the heart from HDAC2-null mice.</text>
</comment>
<comment type="disruption phenotype">
    <text evidence="6 9">Animals develop normal corticospinal tract and raphespinal tract. Mutants show greater axonal growth and functional recovery after central nervous system trauma (PubMed:26203138). Knockout mice have normal cardiac form and function but show augmented hypertrophy and reactivation of the fetal gene program in response to stress compared to wild-type littermates (PubMed:19875726).</text>
</comment>
<comment type="caution">
    <text evidence="1">INPP5F has been initially described as an inositol polyphosphate 5-phosphatase.</text>
</comment>
<comment type="sequence caution" evidence="12">
    <conflict type="frameshift">
        <sequence resource="EMBL-CDS" id="BAC28723"/>
    </conflict>
</comment>